<evidence type="ECO:0000250" key="1">
    <source>
        <dbReference type="UniProtKB" id="P53115"/>
    </source>
</evidence>
<evidence type="ECO:0000250" key="2">
    <source>
        <dbReference type="UniProtKB" id="Q9ULG1"/>
    </source>
</evidence>
<evidence type="ECO:0000255" key="3">
    <source>
        <dbReference type="PROSITE-ProRule" id="PRU00541"/>
    </source>
</evidence>
<evidence type="ECO:0000255" key="4">
    <source>
        <dbReference type="PROSITE-ProRule" id="PRU00542"/>
    </source>
</evidence>
<evidence type="ECO:0000255" key="5">
    <source>
        <dbReference type="PROSITE-ProRule" id="PRU00746"/>
    </source>
</evidence>
<evidence type="ECO:0000256" key="6">
    <source>
        <dbReference type="SAM" id="MobiDB-lite"/>
    </source>
</evidence>
<evidence type="ECO:0000269" key="7">
    <source>
    </source>
</evidence>
<evidence type="ECO:0000305" key="8"/>
<proteinExistence type="evidence at protein level"/>
<accession>O14148</accession>
<accession>O14025</accession>
<keyword id="KW-0010">Activator</keyword>
<keyword id="KW-0067">ATP-binding</keyword>
<keyword id="KW-0227">DNA damage</keyword>
<keyword id="KW-0234">DNA repair</keyword>
<keyword id="KW-0238">DNA-binding</keyword>
<keyword id="KW-0378">Hydrolase</keyword>
<keyword id="KW-0547">Nucleotide-binding</keyword>
<keyword id="KW-0539">Nucleus</keyword>
<keyword id="KW-0597">Phosphoprotein</keyword>
<keyword id="KW-1185">Reference proteome</keyword>
<keyword id="KW-0804">Transcription</keyword>
<keyword id="KW-0805">Transcription regulation</keyword>
<name>INO80_SCHPO</name>
<organism>
    <name type="scientific">Schizosaccharomyces pombe (strain 972 / ATCC 24843)</name>
    <name type="common">Fission yeast</name>
    <dbReference type="NCBI Taxonomy" id="284812"/>
    <lineage>
        <taxon>Eukaryota</taxon>
        <taxon>Fungi</taxon>
        <taxon>Dikarya</taxon>
        <taxon>Ascomycota</taxon>
        <taxon>Taphrinomycotina</taxon>
        <taxon>Schizosaccharomycetes</taxon>
        <taxon>Schizosaccharomycetales</taxon>
        <taxon>Schizosaccharomycetaceae</taxon>
        <taxon>Schizosaccharomyces</taxon>
    </lineage>
</organism>
<sequence length="1604" mass="183049">MDPSRETFDGSTRDSYKPPNGAEMMGQSELNTQNRIPYNTSANNRNWQIPLYWQQRGNEFQASPPPPLGYVTPEYGATGTPVNANNASRVDYATTAANVPEEYANDYSSELAYIHNVNDMPHVDGLSNHSPATQPDLFETPAQSDPILFSSYPHAAQARVDPSISKDLYNMVPRPDANTVSPHAARSASSLPVPKEASETPFRDASTDLFDEHAHAAPMHSSISISTLLSDSDRYEPHVSLTENISPVMAPSIDARLSQTILRGLPPAQKLSPNSSQSQITHNRRKHKLPLNATTNNSVVLTPDTSPLLDSDEVVSDDDSNEQQTMMMKFNYLQHLRNKRDEAVHAEKRRLLDIRGSIHDRLVCRYENRYNKLHASEYNHHHDWAVRQAIREEVAAVEAAKIRADEEKKKKEREEQVRLLQESADKDAEMNEASTATSENEDLKDDLSLADLSSKKTANSQATENNNTPSKAKVKAESKVRSKAKSDKSRAKLSSDTNKDSEKNDNNDASLQSAGVASDGESSPETPLTKASKSKKAKASKLANDTSKNANGETKSTPKKSKKKTSKAQQEANSTTAEGKEKLSGDSTETGNSTNKEASTEDTKANATASAPNKKKKTVETLQQQVIKEIARKEIPRVYKIIQQNQYNRSTNARKTSQLCGREARRWQFRTIKNNKDMQTKAKRAMRETMVFWKRNERVERDLRKKAEREALDRAKKEEELRESRRQARKLDFLITQTELYSHFVGRKMDREQDLPSATNTASVSEINFDSDEEEDIRRLAVESAQEAVQKAREHSQLFDANRQQSPNNSSSDMNEGEMNFQNPTLVNAFEVKQPKMLMCKLKEYQLKGLNWLANLYEQGINGILADEMGLGKTVQSISVMAYLAETHNIWGPFLVIAPASTLHNWQQEITRFVPKLKCIPYWGSTKDRKILRKFWCRKNMTYDENSPFHVVVTSYQLVVLDAQYFQSVKWQYMILDEAQAIKSSSSSRWKSLLAFKCRNRLLLTGTPIQNTMQELWALLHFIMPSLFDSHNEFSEWFSKDIESHAQSNTQLNEQQLKRLHMILKPFMLRRVKKNVQSELGEKIEKEVYCDLTQRQKILYQALRRQISIAELLEKAILGGDDTVASIMNLVMQFRKVCNHPDLFEREDVRSPLSLATWSKSIYINREGNFLDVPYNTRNFITFSIPRLLYEQGGILSVPGLNTSRGFETKYLYNLMNIWNPEYTNDSIKSNPEGSPFSWLRFVDESPQTLFQTFQNPVVHYLDEAEASSSLKEEQLCRQEFCYGKDYSNVRKMLLLPKSITKVDVLGSDFKEDSPFYHLTHVLEESDSQLDLTLLDSVLVQRASAPPIDIYCPGSRQFTVLQSRFQRDHLWSHYLYQPLKGEEDLIINNQAVSKLPIPRKPLLPSFGIAKGSYSNVRIPSMLRFIADSGKLSKLDKLLVELKANDHRVLIYFQMTRMIDLMEEYLTFRQYKYLRLDGSSKISQRRDMVTEWQTRPELFVFLLSTRAGGLGINLTAADTVIFYDSDWNPSIDSQAMDRAHRIGQQKQVTVYRFITRGTIEERIVIRAKEKEEVQKVVISGGETRPTKQMDLKGNSREMVSWLLEE</sequence>
<dbReference type="EC" id="3.6.4.-" evidence="1"/>
<dbReference type="EMBL" id="CU329670">
    <property type="protein sequence ID" value="CAB16246.2"/>
    <property type="molecule type" value="Genomic_DNA"/>
</dbReference>
<dbReference type="RefSeq" id="NP_001018299.1">
    <property type="nucleotide sequence ID" value="NM_001020410.2"/>
</dbReference>
<dbReference type="SMR" id="O14148"/>
<dbReference type="BioGRID" id="280642">
    <property type="interactions" value="21"/>
</dbReference>
<dbReference type="FunCoup" id="O14148">
    <property type="interactions" value="905"/>
</dbReference>
<dbReference type="STRING" id="284812.O14148"/>
<dbReference type="iPTMnet" id="O14148"/>
<dbReference type="PaxDb" id="4896-SPAC29B12.01.1"/>
<dbReference type="EnsemblFungi" id="SPAC29B12.01.1">
    <property type="protein sequence ID" value="SPAC29B12.01.1:pep"/>
    <property type="gene ID" value="SPAC29B12.01"/>
</dbReference>
<dbReference type="GeneID" id="3361566"/>
<dbReference type="KEGG" id="spo:3361566"/>
<dbReference type="PomBase" id="SPAC29B12.01">
    <property type="gene designation" value="ino80"/>
</dbReference>
<dbReference type="VEuPathDB" id="FungiDB:SPAC29B12.01"/>
<dbReference type="eggNOG" id="KOG0388">
    <property type="taxonomic scope" value="Eukaryota"/>
</dbReference>
<dbReference type="HOGENOM" id="CLU_000315_26_2_1"/>
<dbReference type="InParanoid" id="O14148"/>
<dbReference type="OMA" id="CKLKEYQ"/>
<dbReference type="PhylomeDB" id="O14148"/>
<dbReference type="PRO" id="PR:O14148"/>
<dbReference type="Proteomes" id="UP000002485">
    <property type="component" value="Chromosome I"/>
</dbReference>
<dbReference type="GO" id="GO:0000785">
    <property type="term" value="C:chromatin"/>
    <property type="evidence" value="ECO:0000314"/>
    <property type="project" value="PomBase"/>
</dbReference>
<dbReference type="GO" id="GO:0031011">
    <property type="term" value="C:Ino80 complex"/>
    <property type="evidence" value="ECO:0000314"/>
    <property type="project" value="PomBase"/>
</dbReference>
<dbReference type="GO" id="GO:0005524">
    <property type="term" value="F:ATP binding"/>
    <property type="evidence" value="ECO:0007669"/>
    <property type="project" value="UniProtKB-KW"/>
</dbReference>
<dbReference type="GO" id="GO:0016887">
    <property type="term" value="F:ATP hydrolysis activity"/>
    <property type="evidence" value="ECO:0000318"/>
    <property type="project" value="GO_Central"/>
</dbReference>
<dbReference type="GO" id="GO:0140658">
    <property type="term" value="F:ATP-dependent chromatin remodeler activity"/>
    <property type="evidence" value="ECO:0000303"/>
    <property type="project" value="PomBase"/>
</dbReference>
<dbReference type="GO" id="GO:0003677">
    <property type="term" value="F:DNA binding"/>
    <property type="evidence" value="ECO:0007669"/>
    <property type="project" value="UniProtKB-KW"/>
</dbReference>
<dbReference type="GO" id="GO:0042393">
    <property type="term" value="F:histone binding"/>
    <property type="evidence" value="ECO:0000318"/>
    <property type="project" value="GO_Central"/>
</dbReference>
<dbReference type="GO" id="GO:0034080">
    <property type="term" value="P:CENP-A containing chromatin assembly"/>
    <property type="evidence" value="ECO:0000315"/>
    <property type="project" value="PomBase"/>
</dbReference>
<dbReference type="GO" id="GO:0006338">
    <property type="term" value="P:chromatin remodeling"/>
    <property type="evidence" value="ECO:0000314"/>
    <property type="project" value="PomBase"/>
</dbReference>
<dbReference type="GO" id="GO:0006281">
    <property type="term" value="P:DNA repair"/>
    <property type="evidence" value="ECO:0000318"/>
    <property type="project" value="GO_Central"/>
</dbReference>
<dbReference type="GO" id="GO:0045815">
    <property type="term" value="P:transcription initiation-coupled chromatin remodeling"/>
    <property type="evidence" value="ECO:0000305"/>
    <property type="project" value="PomBase"/>
</dbReference>
<dbReference type="CDD" id="cd18002">
    <property type="entry name" value="DEXQc_INO80"/>
    <property type="match status" value="1"/>
</dbReference>
<dbReference type="CDD" id="cd18793">
    <property type="entry name" value="SF2_C_SNF"/>
    <property type="match status" value="1"/>
</dbReference>
<dbReference type="FunFam" id="3.40.50.10810:FF:000022">
    <property type="entry name" value="Blast:Putative DNA helicase Ino80"/>
    <property type="match status" value="1"/>
</dbReference>
<dbReference type="FunFam" id="3.40.50.300:FF:001269">
    <property type="entry name" value="SNF2 family helicase/ATPase"/>
    <property type="match status" value="1"/>
</dbReference>
<dbReference type="Gene3D" id="3.40.50.300">
    <property type="entry name" value="P-loop containing nucleotide triphosphate hydrolases"/>
    <property type="match status" value="1"/>
</dbReference>
<dbReference type="Gene3D" id="3.40.50.10810">
    <property type="entry name" value="Tandem AAA-ATPase domain"/>
    <property type="match status" value="1"/>
</dbReference>
<dbReference type="InterPro" id="IPR020838">
    <property type="entry name" value="DBINO"/>
</dbReference>
<dbReference type="InterPro" id="IPR031047">
    <property type="entry name" value="DEXQc_INO80"/>
</dbReference>
<dbReference type="InterPro" id="IPR014001">
    <property type="entry name" value="Helicase_ATP-bd"/>
</dbReference>
<dbReference type="InterPro" id="IPR001650">
    <property type="entry name" value="Helicase_C-like"/>
</dbReference>
<dbReference type="InterPro" id="IPR050520">
    <property type="entry name" value="INO80/SWR1_helicase"/>
</dbReference>
<dbReference type="InterPro" id="IPR027417">
    <property type="entry name" value="P-loop_NTPase"/>
</dbReference>
<dbReference type="InterPro" id="IPR038718">
    <property type="entry name" value="SNF2-like_sf"/>
</dbReference>
<dbReference type="InterPro" id="IPR049730">
    <property type="entry name" value="SNF2/RAD54-like_C"/>
</dbReference>
<dbReference type="InterPro" id="IPR000330">
    <property type="entry name" value="SNF2_N"/>
</dbReference>
<dbReference type="PANTHER" id="PTHR45685:SF2">
    <property type="entry name" value="CHROMATIN-REMODELING ATPASE INO80"/>
    <property type="match status" value="1"/>
</dbReference>
<dbReference type="PANTHER" id="PTHR45685">
    <property type="entry name" value="HELICASE SRCAP-RELATED"/>
    <property type="match status" value="1"/>
</dbReference>
<dbReference type="Pfam" id="PF13892">
    <property type="entry name" value="DBINO"/>
    <property type="match status" value="1"/>
</dbReference>
<dbReference type="Pfam" id="PF00271">
    <property type="entry name" value="Helicase_C"/>
    <property type="match status" value="1"/>
</dbReference>
<dbReference type="Pfam" id="PF00176">
    <property type="entry name" value="SNF2-rel_dom"/>
    <property type="match status" value="1"/>
</dbReference>
<dbReference type="SMART" id="SM00487">
    <property type="entry name" value="DEXDc"/>
    <property type="match status" value="1"/>
</dbReference>
<dbReference type="SMART" id="SM00490">
    <property type="entry name" value="HELICc"/>
    <property type="match status" value="1"/>
</dbReference>
<dbReference type="SUPFAM" id="SSF52540">
    <property type="entry name" value="P-loop containing nucleoside triphosphate hydrolases"/>
    <property type="match status" value="2"/>
</dbReference>
<dbReference type="PROSITE" id="PS51413">
    <property type="entry name" value="DBINO"/>
    <property type="match status" value="1"/>
</dbReference>
<dbReference type="PROSITE" id="PS51192">
    <property type="entry name" value="HELICASE_ATP_BIND_1"/>
    <property type="match status" value="1"/>
</dbReference>
<dbReference type="PROSITE" id="PS51194">
    <property type="entry name" value="HELICASE_CTER"/>
    <property type="match status" value="1"/>
</dbReference>
<comment type="function">
    <text evidence="5">ATPase component of the INO80 complex which remodels chromatin by shifting nucleosomes and is involved in DNA repair.</text>
</comment>
<comment type="catalytic activity">
    <reaction evidence="1">
        <text>ATP + H2O = ADP + phosphate + H(+)</text>
        <dbReference type="Rhea" id="RHEA:13065"/>
        <dbReference type="ChEBI" id="CHEBI:15377"/>
        <dbReference type="ChEBI" id="CHEBI:15378"/>
        <dbReference type="ChEBI" id="CHEBI:30616"/>
        <dbReference type="ChEBI" id="CHEBI:43474"/>
        <dbReference type="ChEBI" id="CHEBI:456216"/>
    </reaction>
</comment>
<comment type="subunit">
    <text evidence="5">Component of the INO80 chromatin-remodeling complex.</text>
</comment>
<comment type="subcellular location">
    <subcellularLocation>
        <location evidence="5">Nucleus</location>
    </subcellularLocation>
</comment>
<comment type="domain">
    <text evidence="2">The DBINO region is involved in binding to DNA.</text>
</comment>
<comment type="similarity">
    <text evidence="8">Belongs to the SNF2/RAD54 helicase family.</text>
</comment>
<reference key="1">
    <citation type="journal article" date="2002" name="Nature">
        <title>The genome sequence of Schizosaccharomyces pombe.</title>
        <authorList>
            <person name="Wood V."/>
            <person name="Gwilliam R."/>
            <person name="Rajandream M.A."/>
            <person name="Lyne M.H."/>
            <person name="Lyne R."/>
            <person name="Stewart A."/>
            <person name="Sgouros J.G."/>
            <person name="Peat N."/>
            <person name="Hayles J."/>
            <person name="Baker S.G."/>
            <person name="Basham D."/>
            <person name="Bowman S."/>
            <person name="Brooks K."/>
            <person name="Brown D."/>
            <person name="Brown S."/>
            <person name="Chillingworth T."/>
            <person name="Churcher C.M."/>
            <person name="Collins M."/>
            <person name="Connor R."/>
            <person name="Cronin A."/>
            <person name="Davis P."/>
            <person name="Feltwell T."/>
            <person name="Fraser A."/>
            <person name="Gentles S."/>
            <person name="Goble A."/>
            <person name="Hamlin N."/>
            <person name="Harris D.E."/>
            <person name="Hidalgo J."/>
            <person name="Hodgson G."/>
            <person name="Holroyd S."/>
            <person name="Hornsby T."/>
            <person name="Howarth S."/>
            <person name="Huckle E.J."/>
            <person name="Hunt S."/>
            <person name="Jagels K."/>
            <person name="James K.D."/>
            <person name="Jones L."/>
            <person name="Jones M."/>
            <person name="Leather S."/>
            <person name="McDonald S."/>
            <person name="McLean J."/>
            <person name="Mooney P."/>
            <person name="Moule S."/>
            <person name="Mungall K.L."/>
            <person name="Murphy L.D."/>
            <person name="Niblett D."/>
            <person name="Odell C."/>
            <person name="Oliver K."/>
            <person name="O'Neil S."/>
            <person name="Pearson D."/>
            <person name="Quail M.A."/>
            <person name="Rabbinowitsch E."/>
            <person name="Rutherford K.M."/>
            <person name="Rutter S."/>
            <person name="Saunders D."/>
            <person name="Seeger K."/>
            <person name="Sharp S."/>
            <person name="Skelton J."/>
            <person name="Simmonds M.N."/>
            <person name="Squares R."/>
            <person name="Squares S."/>
            <person name="Stevens K."/>
            <person name="Taylor K."/>
            <person name="Taylor R.G."/>
            <person name="Tivey A."/>
            <person name="Walsh S.V."/>
            <person name="Warren T."/>
            <person name="Whitehead S."/>
            <person name="Woodward J.R."/>
            <person name="Volckaert G."/>
            <person name="Aert R."/>
            <person name="Robben J."/>
            <person name="Grymonprez B."/>
            <person name="Weltjens I."/>
            <person name="Vanstreels E."/>
            <person name="Rieger M."/>
            <person name="Schaefer M."/>
            <person name="Mueller-Auer S."/>
            <person name="Gabel C."/>
            <person name="Fuchs M."/>
            <person name="Duesterhoeft A."/>
            <person name="Fritzc C."/>
            <person name="Holzer E."/>
            <person name="Moestl D."/>
            <person name="Hilbert H."/>
            <person name="Borzym K."/>
            <person name="Langer I."/>
            <person name="Beck A."/>
            <person name="Lehrach H."/>
            <person name="Reinhardt R."/>
            <person name="Pohl T.M."/>
            <person name="Eger P."/>
            <person name="Zimmermann W."/>
            <person name="Wedler H."/>
            <person name="Wambutt R."/>
            <person name="Purnelle B."/>
            <person name="Goffeau A."/>
            <person name="Cadieu E."/>
            <person name="Dreano S."/>
            <person name="Gloux S."/>
            <person name="Lelaure V."/>
            <person name="Mottier S."/>
            <person name="Galibert F."/>
            <person name="Aves S.J."/>
            <person name="Xiang Z."/>
            <person name="Hunt C."/>
            <person name="Moore K."/>
            <person name="Hurst S.M."/>
            <person name="Lucas M."/>
            <person name="Rochet M."/>
            <person name="Gaillardin C."/>
            <person name="Tallada V.A."/>
            <person name="Garzon A."/>
            <person name="Thode G."/>
            <person name="Daga R.R."/>
            <person name="Cruzado L."/>
            <person name="Jimenez J."/>
            <person name="Sanchez M."/>
            <person name="del Rey F."/>
            <person name="Benito J."/>
            <person name="Dominguez A."/>
            <person name="Revuelta J.L."/>
            <person name="Moreno S."/>
            <person name="Armstrong J."/>
            <person name="Forsburg S.L."/>
            <person name="Cerutti L."/>
            <person name="Lowe T."/>
            <person name="McCombie W.R."/>
            <person name="Paulsen I."/>
            <person name="Potashkin J."/>
            <person name="Shpakovski G.V."/>
            <person name="Ussery D."/>
            <person name="Barrell B.G."/>
            <person name="Nurse P."/>
        </authorList>
    </citation>
    <scope>NUCLEOTIDE SEQUENCE [LARGE SCALE GENOMIC DNA]</scope>
    <source>
        <strain>972 / ATCC 24843</strain>
    </source>
</reference>
<reference key="2">
    <citation type="journal article" date="2008" name="J. Proteome Res.">
        <title>Phosphoproteome analysis of fission yeast.</title>
        <authorList>
            <person name="Wilson-Grady J.T."/>
            <person name="Villen J."/>
            <person name="Gygi S.P."/>
        </authorList>
    </citation>
    <scope>PHOSPHORYLATION [LARGE SCALE ANALYSIS] AT THR-179 AND SER-518</scope>
    <scope>IDENTIFICATION BY MASS SPECTROMETRY</scope>
</reference>
<feature type="chain" id="PRO_0000350963" description="Chromatin-remodeling ATPase INO80">
    <location>
        <begin position="1"/>
        <end position="1604"/>
    </location>
</feature>
<feature type="domain" description="DBINO" evidence="5">
    <location>
        <begin position="626"/>
        <end position="751"/>
    </location>
</feature>
<feature type="domain" description="Helicase ATP-binding" evidence="3">
    <location>
        <begin position="854"/>
        <end position="1026"/>
    </location>
</feature>
<feature type="domain" description="Helicase C-terminal" evidence="4">
    <location>
        <begin position="1433"/>
        <end position="1591"/>
    </location>
</feature>
<feature type="region of interest" description="Disordered" evidence="6">
    <location>
        <begin position="1"/>
        <end position="38"/>
    </location>
</feature>
<feature type="region of interest" description="Disordered" evidence="6">
    <location>
        <begin position="174"/>
        <end position="201"/>
    </location>
</feature>
<feature type="region of interest" description="Disordered" evidence="6">
    <location>
        <begin position="266"/>
        <end position="285"/>
    </location>
</feature>
<feature type="region of interest" description="Disordered" evidence="6">
    <location>
        <begin position="297"/>
        <end position="316"/>
    </location>
</feature>
<feature type="region of interest" description="Disordered" evidence="6">
    <location>
        <begin position="406"/>
        <end position="620"/>
    </location>
</feature>
<feature type="region of interest" description="Disordered" evidence="6">
    <location>
        <begin position="792"/>
        <end position="820"/>
    </location>
</feature>
<feature type="short sequence motif" description="DEAQ box">
    <location>
        <begin position="977"/>
        <end position="980"/>
    </location>
</feature>
<feature type="compositionally biased region" description="Basic and acidic residues" evidence="6">
    <location>
        <begin position="1"/>
        <end position="16"/>
    </location>
</feature>
<feature type="compositionally biased region" description="Polar residues" evidence="6">
    <location>
        <begin position="28"/>
        <end position="38"/>
    </location>
</feature>
<feature type="compositionally biased region" description="Polar residues" evidence="6">
    <location>
        <begin position="271"/>
        <end position="281"/>
    </location>
</feature>
<feature type="compositionally biased region" description="Basic and acidic residues" evidence="6">
    <location>
        <begin position="406"/>
        <end position="429"/>
    </location>
</feature>
<feature type="compositionally biased region" description="Polar residues" evidence="6">
    <location>
        <begin position="457"/>
        <end position="470"/>
    </location>
</feature>
<feature type="compositionally biased region" description="Basic and acidic residues" evidence="6">
    <location>
        <begin position="474"/>
        <end position="490"/>
    </location>
</feature>
<feature type="compositionally biased region" description="Basic and acidic residues" evidence="6">
    <location>
        <begin position="497"/>
        <end position="506"/>
    </location>
</feature>
<feature type="compositionally biased region" description="Polar residues" evidence="6">
    <location>
        <begin position="507"/>
        <end position="526"/>
    </location>
</feature>
<feature type="compositionally biased region" description="Polar residues" evidence="6">
    <location>
        <begin position="543"/>
        <end position="553"/>
    </location>
</feature>
<feature type="compositionally biased region" description="Basic residues" evidence="6">
    <location>
        <begin position="557"/>
        <end position="566"/>
    </location>
</feature>
<feature type="compositionally biased region" description="Polar residues" evidence="6">
    <location>
        <begin position="568"/>
        <end position="577"/>
    </location>
</feature>
<feature type="compositionally biased region" description="Polar residues" evidence="6">
    <location>
        <begin position="585"/>
        <end position="597"/>
    </location>
</feature>
<feature type="compositionally biased region" description="Polar residues" evidence="6">
    <location>
        <begin position="802"/>
        <end position="820"/>
    </location>
</feature>
<feature type="binding site" evidence="3">
    <location>
        <begin position="867"/>
        <end position="874"/>
    </location>
    <ligand>
        <name>ATP</name>
        <dbReference type="ChEBI" id="CHEBI:30616"/>
    </ligand>
</feature>
<feature type="modified residue" description="Phosphothreonine" evidence="7">
    <location>
        <position position="179"/>
    </location>
</feature>
<feature type="modified residue" description="Phosphoserine" evidence="7">
    <location>
        <position position="518"/>
    </location>
</feature>
<gene>
    <name type="primary">ino80</name>
    <name type="ORF">SPAC29B12.01</name>
</gene>
<protein>
    <recommendedName>
        <fullName evidence="1">Chromatin-remodeling ATPase INO80</fullName>
        <ecNumber evidence="1">3.6.4.-</ecNumber>
    </recommendedName>
</protein>